<proteinExistence type="inferred from homology"/>
<organism>
    <name type="scientific">Kluyveromyces lactis (strain ATCC 8585 / CBS 2359 / DSM 70799 / NBRC 1267 / NRRL Y-1140 / WM37)</name>
    <name type="common">Yeast</name>
    <name type="synonym">Candida sphaerica</name>
    <dbReference type="NCBI Taxonomy" id="284590"/>
    <lineage>
        <taxon>Eukaryota</taxon>
        <taxon>Fungi</taxon>
        <taxon>Dikarya</taxon>
        <taxon>Ascomycota</taxon>
        <taxon>Saccharomycotina</taxon>
        <taxon>Saccharomycetes</taxon>
        <taxon>Saccharomycetales</taxon>
        <taxon>Saccharomycetaceae</taxon>
        <taxon>Kluyveromyces</taxon>
    </lineage>
</organism>
<sequence>MVYGVSKMANKNRKNLKPVKSDRKDRISKNHSKKKVNKNSLKKVATTDITVNANELNWKSVDIPDTLDDFGGFYGLEEIDGVDVKVVDGKVQFITKDNKNVKKEPEQVEEKDNIVFQEDDEDVNMDELIEFKNFDDIKEGELSAASDDEESEFHVSTEEEGEEGEEAEDQEEERSEKENVKGEAGTVVTEDQTNDDLLQSNVFSSNVDIDDQEPPVLPEWSENMDLSFTVLKGLSGLGFTRPTEIQLKSIPLALKGHNIMGKASTGSGKTLAYGIPIIEQLIKDTSNDRSIGLIFTPTRELAHQVTDHLQKVWTKMNKLNKYTILSLTGGLSIQKQERILKYDGSGRIIVATPGRFLELLERNPDLIPRFAKIDTLVLDEADRLLQDGHFDEFEKILKLLGKARKIKTSIDGKPTGSGWQTMIFSATFSLDLFTKLDKTSWKILKTAGGENNEMEQVLNHLMKKIQFKSKPVIIDTNPEHKVTSQVKESLIECLPMERDLYVYYFIMMYPGTTLVFCNAIDSVKKLNAFLNNLKISSFQIHSSMAQKNRLRNLEKFKEQSEKNSKVGKPTILIASDVAARGLDISGIKHVLHYHLPRSADVYIHRSGRTARGDNEGVSVMICSPQESMGPLRKLRKVLSTKKSSNPRKTKWQNDVPMLPLEPDIVSQLRERSKIASELADDEIATKSLHKDDNWLKKAAEELDIELDSEEEEKDQFLARNKTKKLNKQLEKNENKALKYQLNELLKMPLRKDLRKSYLTGGLTNLADTLVKHKGHNSIIGHDKVDALQTLKGKKHK</sequence>
<comment type="function">
    <text evidence="1">ATP-binding RNA helicase involved in the biogenesis of 60S ribosomal subunits and is required for the normal formation of 25S and 5.8S rRNAs.</text>
</comment>
<comment type="catalytic activity">
    <reaction>
        <text>ATP + H2O = ADP + phosphate + H(+)</text>
        <dbReference type="Rhea" id="RHEA:13065"/>
        <dbReference type="ChEBI" id="CHEBI:15377"/>
        <dbReference type="ChEBI" id="CHEBI:15378"/>
        <dbReference type="ChEBI" id="CHEBI:30616"/>
        <dbReference type="ChEBI" id="CHEBI:43474"/>
        <dbReference type="ChEBI" id="CHEBI:456216"/>
        <dbReference type="EC" id="3.6.4.13"/>
    </reaction>
</comment>
<comment type="subcellular location">
    <subcellularLocation>
        <location evidence="1">Nucleus</location>
        <location evidence="1">Nucleolus</location>
    </subcellularLocation>
</comment>
<comment type="domain">
    <text>The Q motif is unique to and characteristic of the DEAD box family of RNA helicases and controls ATP binding and hydrolysis.</text>
</comment>
<comment type="similarity">
    <text evidence="5">Belongs to the DEAD box helicase family. DDX24/MAK5 subfamily.</text>
</comment>
<protein>
    <recommendedName>
        <fullName>ATP-dependent RNA helicase MAK5</fullName>
        <ecNumber>3.6.4.13</ecNumber>
    </recommendedName>
</protein>
<feature type="chain" id="PRO_0000232237" description="ATP-dependent RNA helicase MAK5">
    <location>
        <begin position="1"/>
        <end position="796"/>
    </location>
</feature>
<feature type="domain" description="Helicase ATP-binding" evidence="2">
    <location>
        <begin position="250"/>
        <end position="446"/>
    </location>
</feature>
<feature type="domain" description="Helicase C-terminal" evidence="3">
    <location>
        <begin position="501"/>
        <end position="653"/>
    </location>
</feature>
<feature type="region of interest" description="Disordered" evidence="4">
    <location>
        <begin position="1"/>
        <end position="39"/>
    </location>
</feature>
<feature type="region of interest" description="Disordered" evidence="4">
    <location>
        <begin position="142"/>
        <end position="197"/>
    </location>
</feature>
<feature type="short sequence motif" description="Q motif">
    <location>
        <begin position="219"/>
        <end position="247"/>
    </location>
</feature>
<feature type="short sequence motif" description="DEAD box">
    <location>
        <begin position="379"/>
        <end position="382"/>
    </location>
</feature>
<feature type="compositionally biased region" description="Basic and acidic residues" evidence="4">
    <location>
        <begin position="19"/>
        <end position="28"/>
    </location>
</feature>
<feature type="compositionally biased region" description="Basic residues" evidence="4">
    <location>
        <begin position="29"/>
        <end position="39"/>
    </location>
</feature>
<feature type="compositionally biased region" description="Acidic residues" evidence="4">
    <location>
        <begin position="158"/>
        <end position="173"/>
    </location>
</feature>
<feature type="binding site" evidence="2">
    <location>
        <begin position="263"/>
        <end position="270"/>
    </location>
    <ligand>
        <name>ATP</name>
        <dbReference type="ChEBI" id="CHEBI:30616"/>
    </ligand>
</feature>
<keyword id="KW-0067">ATP-binding</keyword>
<keyword id="KW-0347">Helicase</keyword>
<keyword id="KW-0378">Hydrolase</keyword>
<keyword id="KW-0547">Nucleotide-binding</keyword>
<keyword id="KW-0539">Nucleus</keyword>
<keyword id="KW-1185">Reference proteome</keyword>
<keyword id="KW-0690">Ribosome biogenesis</keyword>
<keyword id="KW-0694">RNA-binding</keyword>
<keyword id="KW-0698">rRNA processing</keyword>
<accession>Q6CTN7</accession>
<reference key="1">
    <citation type="journal article" date="2004" name="Nature">
        <title>Genome evolution in yeasts.</title>
        <authorList>
            <person name="Dujon B."/>
            <person name="Sherman D."/>
            <person name="Fischer G."/>
            <person name="Durrens P."/>
            <person name="Casaregola S."/>
            <person name="Lafontaine I."/>
            <person name="de Montigny J."/>
            <person name="Marck C."/>
            <person name="Neuveglise C."/>
            <person name="Talla E."/>
            <person name="Goffard N."/>
            <person name="Frangeul L."/>
            <person name="Aigle M."/>
            <person name="Anthouard V."/>
            <person name="Babour A."/>
            <person name="Barbe V."/>
            <person name="Barnay S."/>
            <person name="Blanchin S."/>
            <person name="Beckerich J.-M."/>
            <person name="Beyne E."/>
            <person name="Bleykasten C."/>
            <person name="Boisrame A."/>
            <person name="Boyer J."/>
            <person name="Cattolico L."/>
            <person name="Confanioleri F."/>
            <person name="de Daruvar A."/>
            <person name="Despons L."/>
            <person name="Fabre E."/>
            <person name="Fairhead C."/>
            <person name="Ferry-Dumazet H."/>
            <person name="Groppi A."/>
            <person name="Hantraye F."/>
            <person name="Hennequin C."/>
            <person name="Jauniaux N."/>
            <person name="Joyet P."/>
            <person name="Kachouri R."/>
            <person name="Kerrest A."/>
            <person name="Koszul R."/>
            <person name="Lemaire M."/>
            <person name="Lesur I."/>
            <person name="Ma L."/>
            <person name="Muller H."/>
            <person name="Nicaud J.-M."/>
            <person name="Nikolski M."/>
            <person name="Oztas S."/>
            <person name="Ozier-Kalogeropoulos O."/>
            <person name="Pellenz S."/>
            <person name="Potier S."/>
            <person name="Richard G.-F."/>
            <person name="Straub M.-L."/>
            <person name="Suleau A."/>
            <person name="Swennen D."/>
            <person name="Tekaia F."/>
            <person name="Wesolowski-Louvel M."/>
            <person name="Westhof E."/>
            <person name="Wirth B."/>
            <person name="Zeniou-Meyer M."/>
            <person name="Zivanovic Y."/>
            <person name="Bolotin-Fukuhara M."/>
            <person name="Thierry A."/>
            <person name="Bouchier C."/>
            <person name="Caudron B."/>
            <person name="Scarpelli C."/>
            <person name="Gaillardin C."/>
            <person name="Weissenbach J."/>
            <person name="Wincker P."/>
            <person name="Souciet J.-L."/>
        </authorList>
    </citation>
    <scope>NUCLEOTIDE SEQUENCE [LARGE SCALE GENOMIC DNA]</scope>
    <source>
        <strain>ATCC 8585 / CBS 2359 / DSM 70799 / NBRC 1267 / NRRL Y-1140 / WM37</strain>
    </source>
</reference>
<evidence type="ECO:0000250" key="1"/>
<evidence type="ECO:0000255" key="2">
    <source>
        <dbReference type="PROSITE-ProRule" id="PRU00541"/>
    </source>
</evidence>
<evidence type="ECO:0000255" key="3">
    <source>
        <dbReference type="PROSITE-ProRule" id="PRU00542"/>
    </source>
</evidence>
<evidence type="ECO:0000256" key="4">
    <source>
        <dbReference type="SAM" id="MobiDB-lite"/>
    </source>
</evidence>
<evidence type="ECO:0000305" key="5"/>
<gene>
    <name type="primary">MAK5</name>
    <name type="ordered locus">KLLA0C11253g</name>
</gene>
<name>MAK5_KLULA</name>
<dbReference type="EC" id="3.6.4.13"/>
<dbReference type="EMBL" id="CR382123">
    <property type="protein sequence ID" value="CAH01553.1"/>
    <property type="molecule type" value="Genomic_DNA"/>
</dbReference>
<dbReference type="RefSeq" id="XP_452702.1">
    <property type="nucleotide sequence ID" value="XM_452702.1"/>
</dbReference>
<dbReference type="SMR" id="Q6CTN7"/>
<dbReference type="FunCoup" id="Q6CTN7">
    <property type="interactions" value="1021"/>
</dbReference>
<dbReference type="STRING" id="284590.Q6CTN7"/>
<dbReference type="PaxDb" id="284590-Q6CTN7"/>
<dbReference type="KEGG" id="kla:KLLA0_C11253g"/>
<dbReference type="eggNOG" id="KOG0347">
    <property type="taxonomic scope" value="Eukaryota"/>
</dbReference>
<dbReference type="HOGENOM" id="CLU_003041_13_0_1"/>
<dbReference type="InParanoid" id="Q6CTN7"/>
<dbReference type="OMA" id="QMIQKAR"/>
<dbReference type="Proteomes" id="UP000000598">
    <property type="component" value="Chromosome C"/>
</dbReference>
<dbReference type="GO" id="GO:0005829">
    <property type="term" value="C:cytosol"/>
    <property type="evidence" value="ECO:0007669"/>
    <property type="project" value="TreeGrafter"/>
</dbReference>
<dbReference type="GO" id="GO:0005730">
    <property type="term" value="C:nucleolus"/>
    <property type="evidence" value="ECO:0007669"/>
    <property type="project" value="UniProtKB-SubCell"/>
</dbReference>
<dbReference type="GO" id="GO:0005524">
    <property type="term" value="F:ATP binding"/>
    <property type="evidence" value="ECO:0007669"/>
    <property type="project" value="UniProtKB-KW"/>
</dbReference>
<dbReference type="GO" id="GO:0016887">
    <property type="term" value="F:ATP hydrolysis activity"/>
    <property type="evidence" value="ECO:0007669"/>
    <property type="project" value="RHEA"/>
</dbReference>
<dbReference type="GO" id="GO:0003723">
    <property type="term" value="F:RNA binding"/>
    <property type="evidence" value="ECO:0007669"/>
    <property type="project" value="UniProtKB-KW"/>
</dbReference>
<dbReference type="GO" id="GO:0003724">
    <property type="term" value="F:RNA helicase activity"/>
    <property type="evidence" value="ECO:0007669"/>
    <property type="project" value="UniProtKB-EC"/>
</dbReference>
<dbReference type="GO" id="GO:0006364">
    <property type="term" value="P:rRNA processing"/>
    <property type="evidence" value="ECO:0007669"/>
    <property type="project" value="UniProtKB-KW"/>
</dbReference>
<dbReference type="CDD" id="cd17946">
    <property type="entry name" value="DEADc_DDX24"/>
    <property type="match status" value="1"/>
</dbReference>
<dbReference type="CDD" id="cd18787">
    <property type="entry name" value="SF2_C_DEAD"/>
    <property type="match status" value="1"/>
</dbReference>
<dbReference type="Gene3D" id="3.40.50.300">
    <property type="entry name" value="P-loop containing nucleotide triphosphate hydrolases"/>
    <property type="match status" value="2"/>
</dbReference>
<dbReference type="InterPro" id="IPR011545">
    <property type="entry name" value="DEAD/DEAH_box_helicase_dom"/>
</dbReference>
<dbReference type="InterPro" id="IPR050079">
    <property type="entry name" value="DEAD_box_RNA_helicase"/>
</dbReference>
<dbReference type="InterPro" id="IPR014001">
    <property type="entry name" value="Helicase_ATP-bd"/>
</dbReference>
<dbReference type="InterPro" id="IPR001650">
    <property type="entry name" value="Helicase_C-like"/>
</dbReference>
<dbReference type="InterPro" id="IPR027417">
    <property type="entry name" value="P-loop_NTPase"/>
</dbReference>
<dbReference type="InterPro" id="IPR000629">
    <property type="entry name" value="RNA-helicase_DEAD-box_CS"/>
</dbReference>
<dbReference type="InterPro" id="IPR014014">
    <property type="entry name" value="RNA_helicase_DEAD_Q_motif"/>
</dbReference>
<dbReference type="PANTHER" id="PTHR47959:SF1">
    <property type="entry name" value="ATP-DEPENDENT RNA HELICASE DBPA"/>
    <property type="match status" value="1"/>
</dbReference>
<dbReference type="PANTHER" id="PTHR47959">
    <property type="entry name" value="ATP-DEPENDENT RNA HELICASE RHLE-RELATED"/>
    <property type="match status" value="1"/>
</dbReference>
<dbReference type="Pfam" id="PF00270">
    <property type="entry name" value="DEAD"/>
    <property type="match status" value="1"/>
</dbReference>
<dbReference type="Pfam" id="PF00271">
    <property type="entry name" value="Helicase_C"/>
    <property type="match status" value="1"/>
</dbReference>
<dbReference type="SMART" id="SM00487">
    <property type="entry name" value="DEXDc"/>
    <property type="match status" value="1"/>
</dbReference>
<dbReference type="SMART" id="SM00490">
    <property type="entry name" value="HELICc"/>
    <property type="match status" value="1"/>
</dbReference>
<dbReference type="SUPFAM" id="SSF52540">
    <property type="entry name" value="P-loop containing nucleoside triphosphate hydrolases"/>
    <property type="match status" value="1"/>
</dbReference>
<dbReference type="PROSITE" id="PS00039">
    <property type="entry name" value="DEAD_ATP_HELICASE"/>
    <property type="match status" value="1"/>
</dbReference>
<dbReference type="PROSITE" id="PS51192">
    <property type="entry name" value="HELICASE_ATP_BIND_1"/>
    <property type="match status" value="1"/>
</dbReference>
<dbReference type="PROSITE" id="PS51194">
    <property type="entry name" value="HELICASE_CTER"/>
    <property type="match status" value="1"/>
</dbReference>
<dbReference type="PROSITE" id="PS51195">
    <property type="entry name" value="Q_MOTIF"/>
    <property type="match status" value="1"/>
</dbReference>